<dbReference type="EC" id="2.7.4.3" evidence="1"/>
<dbReference type="EMBL" id="BA000039">
    <property type="protein sequence ID" value="BAC07653.1"/>
    <property type="molecule type" value="Genomic_DNA"/>
</dbReference>
<dbReference type="RefSeq" id="NP_680891.1">
    <property type="nucleotide sequence ID" value="NC_004113.1"/>
</dbReference>
<dbReference type="RefSeq" id="WP_011055955.1">
    <property type="nucleotide sequence ID" value="NC_004113.1"/>
</dbReference>
<dbReference type="SMR" id="Q8DML4"/>
<dbReference type="STRING" id="197221.gene:10746678"/>
<dbReference type="EnsemblBacteria" id="BAC07653">
    <property type="protein sequence ID" value="BAC07653"/>
    <property type="gene ID" value="BAC07653"/>
</dbReference>
<dbReference type="KEGG" id="tel:tlr0100"/>
<dbReference type="PATRIC" id="fig|197221.4.peg.103"/>
<dbReference type="eggNOG" id="COG0563">
    <property type="taxonomic scope" value="Bacteria"/>
</dbReference>
<dbReference type="UniPathway" id="UPA00588">
    <property type="reaction ID" value="UER00649"/>
</dbReference>
<dbReference type="Proteomes" id="UP000000440">
    <property type="component" value="Chromosome"/>
</dbReference>
<dbReference type="GO" id="GO:0005737">
    <property type="term" value="C:cytoplasm"/>
    <property type="evidence" value="ECO:0007669"/>
    <property type="project" value="UniProtKB-SubCell"/>
</dbReference>
<dbReference type="GO" id="GO:0004017">
    <property type="term" value="F:adenylate kinase activity"/>
    <property type="evidence" value="ECO:0007669"/>
    <property type="project" value="UniProtKB-UniRule"/>
</dbReference>
<dbReference type="GO" id="GO:0005524">
    <property type="term" value="F:ATP binding"/>
    <property type="evidence" value="ECO:0007669"/>
    <property type="project" value="UniProtKB-UniRule"/>
</dbReference>
<dbReference type="GO" id="GO:0044209">
    <property type="term" value="P:AMP salvage"/>
    <property type="evidence" value="ECO:0007669"/>
    <property type="project" value="UniProtKB-UniRule"/>
</dbReference>
<dbReference type="CDD" id="cd01428">
    <property type="entry name" value="ADK"/>
    <property type="match status" value="1"/>
</dbReference>
<dbReference type="Gene3D" id="3.40.50.300">
    <property type="entry name" value="P-loop containing nucleotide triphosphate hydrolases"/>
    <property type="match status" value="1"/>
</dbReference>
<dbReference type="HAMAP" id="MF_00235">
    <property type="entry name" value="Adenylate_kinase_Adk"/>
    <property type="match status" value="1"/>
</dbReference>
<dbReference type="InterPro" id="IPR000850">
    <property type="entry name" value="Adenylat/UMP-CMP_kin"/>
</dbReference>
<dbReference type="InterPro" id="IPR033690">
    <property type="entry name" value="Adenylat_kinase_CS"/>
</dbReference>
<dbReference type="InterPro" id="IPR027417">
    <property type="entry name" value="P-loop_NTPase"/>
</dbReference>
<dbReference type="NCBIfam" id="NF001381">
    <property type="entry name" value="PRK00279.1-3"/>
    <property type="match status" value="1"/>
</dbReference>
<dbReference type="NCBIfam" id="NF011100">
    <property type="entry name" value="PRK14527.1"/>
    <property type="match status" value="1"/>
</dbReference>
<dbReference type="NCBIfam" id="NF011105">
    <property type="entry name" value="PRK14532.1"/>
    <property type="match status" value="1"/>
</dbReference>
<dbReference type="PANTHER" id="PTHR23359">
    <property type="entry name" value="NUCLEOTIDE KINASE"/>
    <property type="match status" value="1"/>
</dbReference>
<dbReference type="Pfam" id="PF00406">
    <property type="entry name" value="ADK"/>
    <property type="match status" value="1"/>
</dbReference>
<dbReference type="PRINTS" id="PR00094">
    <property type="entry name" value="ADENYLTKNASE"/>
</dbReference>
<dbReference type="SUPFAM" id="SSF52540">
    <property type="entry name" value="P-loop containing nucleoside triphosphate hydrolases"/>
    <property type="match status" value="1"/>
</dbReference>
<dbReference type="PROSITE" id="PS00113">
    <property type="entry name" value="ADENYLATE_KINASE"/>
    <property type="match status" value="1"/>
</dbReference>
<organism>
    <name type="scientific">Thermosynechococcus vestitus (strain NIES-2133 / IAM M-273 / BP-1)</name>
    <dbReference type="NCBI Taxonomy" id="197221"/>
    <lineage>
        <taxon>Bacteria</taxon>
        <taxon>Bacillati</taxon>
        <taxon>Cyanobacteriota</taxon>
        <taxon>Cyanophyceae</taxon>
        <taxon>Acaryochloridales</taxon>
        <taxon>Thermosynechococcaceae</taxon>
        <taxon>Thermosynechococcus</taxon>
    </lineage>
</organism>
<keyword id="KW-0067">ATP-binding</keyword>
<keyword id="KW-0963">Cytoplasm</keyword>
<keyword id="KW-0418">Kinase</keyword>
<keyword id="KW-0545">Nucleotide biosynthesis</keyword>
<keyword id="KW-0547">Nucleotide-binding</keyword>
<keyword id="KW-1185">Reference proteome</keyword>
<keyword id="KW-0808">Transferase</keyword>
<protein>
    <recommendedName>
        <fullName evidence="1">Adenylate kinase</fullName>
        <shortName evidence="1">AK</shortName>
        <ecNumber evidence="1">2.7.4.3</ecNumber>
    </recommendedName>
    <alternativeName>
        <fullName evidence="1">ATP-AMP transphosphorylase</fullName>
    </alternativeName>
    <alternativeName>
        <fullName evidence="1">ATP:AMP phosphotransferase</fullName>
    </alternativeName>
    <alternativeName>
        <fullName evidence="1">Adenylate monophosphate kinase</fullName>
    </alternativeName>
</protein>
<evidence type="ECO:0000255" key="1">
    <source>
        <dbReference type="HAMAP-Rule" id="MF_00235"/>
    </source>
</evidence>
<reference key="1">
    <citation type="journal article" date="2002" name="DNA Res.">
        <title>Complete genome structure of the thermophilic cyanobacterium Thermosynechococcus elongatus BP-1.</title>
        <authorList>
            <person name="Nakamura Y."/>
            <person name="Kaneko T."/>
            <person name="Sato S."/>
            <person name="Ikeuchi M."/>
            <person name="Katoh H."/>
            <person name="Sasamoto S."/>
            <person name="Watanabe A."/>
            <person name="Iriguchi M."/>
            <person name="Kawashima K."/>
            <person name="Kimura T."/>
            <person name="Kishida Y."/>
            <person name="Kiyokawa C."/>
            <person name="Kohara M."/>
            <person name="Matsumoto M."/>
            <person name="Matsuno A."/>
            <person name="Nakazaki N."/>
            <person name="Shimpo S."/>
            <person name="Sugimoto M."/>
            <person name="Takeuchi C."/>
            <person name="Yamada M."/>
            <person name="Tabata S."/>
        </authorList>
    </citation>
    <scope>NUCLEOTIDE SEQUENCE [LARGE SCALE GENOMIC DNA]</scope>
    <source>
        <strain>NIES-2133 / IAM M-273 / BP-1</strain>
    </source>
</reference>
<accession>Q8DML4</accession>
<gene>
    <name evidence="1" type="primary">adk</name>
    <name type="ordered locus">tlr0100</name>
</gene>
<name>KAD_THEVB</name>
<proteinExistence type="inferred from homology"/>
<comment type="function">
    <text evidence="1">Catalyzes the reversible transfer of the terminal phosphate group between ATP and AMP. Plays an important role in cellular energy homeostasis and in adenine nucleotide metabolism.</text>
</comment>
<comment type="catalytic activity">
    <reaction evidence="1">
        <text>AMP + ATP = 2 ADP</text>
        <dbReference type="Rhea" id="RHEA:12973"/>
        <dbReference type="ChEBI" id="CHEBI:30616"/>
        <dbReference type="ChEBI" id="CHEBI:456215"/>
        <dbReference type="ChEBI" id="CHEBI:456216"/>
        <dbReference type="EC" id="2.7.4.3"/>
    </reaction>
</comment>
<comment type="pathway">
    <text evidence="1">Purine metabolism; AMP biosynthesis via salvage pathway; AMP from ADP: step 1/1.</text>
</comment>
<comment type="subunit">
    <text evidence="1">Monomer.</text>
</comment>
<comment type="subcellular location">
    <subcellularLocation>
        <location evidence="1">Cytoplasm</location>
    </subcellularLocation>
</comment>
<comment type="domain">
    <text evidence="1">Consists of three domains, a large central CORE domain and two small peripheral domains, NMPbind and LID, which undergo movements during catalysis. The LID domain closes over the site of phosphoryl transfer upon ATP binding. Assembling and dissambling the active center during each catalytic cycle provides an effective means to prevent ATP hydrolysis.</text>
</comment>
<comment type="similarity">
    <text evidence="1">Belongs to the adenylate kinase family.</text>
</comment>
<sequence length="195" mass="21524">MRLILFGGPGSGKGTQAAILTTLLGIPHISTGDILRAERAAGTLLGQQAQSYMDRGELVPDQVIVDMVANRLQQPDTAAGWLLDGFPRNGAQAAVFEEMLKSIHQDYDYLLFLDVPAAILQERALNRAKQAVNGQQRSDDTPETILKRLQVYERETLPMIQQYMSHPKFVPIDGTRTIEEVTAAIQARIGEVNRV</sequence>
<feature type="chain" id="PRO_0000158868" description="Adenylate kinase">
    <location>
        <begin position="1"/>
        <end position="195"/>
    </location>
</feature>
<feature type="region of interest" description="NMP" evidence="1">
    <location>
        <begin position="30"/>
        <end position="59"/>
    </location>
</feature>
<feature type="region of interest" description="LID" evidence="1">
    <location>
        <begin position="126"/>
        <end position="140"/>
    </location>
</feature>
<feature type="binding site" evidence="1">
    <location>
        <begin position="10"/>
        <end position="15"/>
    </location>
    <ligand>
        <name>ATP</name>
        <dbReference type="ChEBI" id="CHEBI:30616"/>
    </ligand>
</feature>
<feature type="binding site" evidence="1">
    <location>
        <position position="31"/>
    </location>
    <ligand>
        <name>AMP</name>
        <dbReference type="ChEBI" id="CHEBI:456215"/>
    </ligand>
</feature>
<feature type="binding site" evidence="1">
    <location>
        <position position="36"/>
    </location>
    <ligand>
        <name>AMP</name>
        <dbReference type="ChEBI" id="CHEBI:456215"/>
    </ligand>
</feature>
<feature type="binding site" evidence="1">
    <location>
        <begin position="57"/>
        <end position="59"/>
    </location>
    <ligand>
        <name>AMP</name>
        <dbReference type="ChEBI" id="CHEBI:456215"/>
    </ligand>
</feature>
<feature type="binding site" evidence="1">
    <location>
        <begin position="85"/>
        <end position="88"/>
    </location>
    <ligand>
        <name>AMP</name>
        <dbReference type="ChEBI" id="CHEBI:456215"/>
    </ligand>
</feature>
<feature type="binding site" evidence="1">
    <location>
        <position position="92"/>
    </location>
    <ligand>
        <name>AMP</name>
        <dbReference type="ChEBI" id="CHEBI:456215"/>
    </ligand>
</feature>
<feature type="binding site" evidence="1">
    <location>
        <position position="127"/>
    </location>
    <ligand>
        <name>ATP</name>
        <dbReference type="ChEBI" id="CHEBI:30616"/>
    </ligand>
</feature>
<feature type="binding site" evidence="1">
    <location>
        <position position="137"/>
    </location>
    <ligand>
        <name>AMP</name>
        <dbReference type="ChEBI" id="CHEBI:456215"/>
    </ligand>
</feature>
<feature type="binding site" evidence="1">
    <location>
        <position position="148"/>
    </location>
    <ligand>
        <name>AMP</name>
        <dbReference type="ChEBI" id="CHEBI:456215"/>
    </ligand>
</feature>
<feature type="binding site" evidence="1">
    <location>
        <position position="176"/>
    </location>
    <ligand>
        <name>ATP</name>
        <dbReference type="ChEBI" id="CHEBI:30616"/>
    </ligand>
</feature>